<comment type="function">
    <text evidence="1">Involved in the biosynthesis of the chorismate, which leads to the biosynthesis of aromatic amino acids. Catalyzes the reversible NADPH linked reduction of 3-dehydroshikimate (DHSA) to yield shikimate (SA).</text>
</comment>
<comment type="catalytic activity">
    <reaction evidence="1">
        <text>shikimate + NADP(+) = 3-dehydroshikimate + NADPH + H(+)</text>
        <dbReference type="Rhea" id="RHEA:17737"/>
        <dbReference type="ChEBI" id="CHEBI:15378"/>
        <dbReference type="ChEBI" id="CHEBI:16630"/>
        <dbReference type="ChEBI" id="CHEBI:36208"/>
        <dbReference type="ChEBI" id="CHEBI:57783"/>
        <dbReference type="ChEBI" id="CHEBI:58349"/>
        <dbReference type="EC" id="1.1.1.25"/>
    </reaction>
</comment>
<comment type="pathway">
    <text evidence="1">Metabolic intermediate biosynthesis; chorismate biosynthesis; chorismate from D-erythrose 4-phosphate and phosphoenolpyruvate: step 4/7.</text>
</comment>
<comment type="subunit">
    <text evidence="1">Homodimer.</text>
</comment>
<comment type="similarity">
    <text evidence="1">Belongs to the shikimate dehydrogenase family.</text>
</comment>
<gene>
    <name evidence="1" type="primary">aroE</name>
    <name type="ordered locus">Moth_1558</name>
</gene>
<proteinExistence type="inferred from homology"/>
<name>AROE_MOOTA</name>
<feature type="chain" id="PRO_0000325136" description="Shikimate dehydrogenase (NADP(+))">
    <location>
        <begin position="1"/>
        <end position="295"/>
    </location>
</feature>
<feature type="active site" description="Proton acceptor" evidence="1">
    <location>
        <position position="72"/>
    </location>
</feature>
<feature type="binding site" evidence="1">
    <location>
        <begin position="21"/>
        <end position="23"/>
    </location>
    <ligand>
        <name>shikimate</name>
        <dbReference type="ChEBI" id="CHEBI:36208"/>
    </ligand>
</feature>
<feature type="binding site" evidence="1">
    <location>
        <position position="68"/>
    </location>
    <ligand>
        <name>shikimate</name>
        <dbReference type="ChEBI" id="CHEBI:36208"/>
    </ligand>
</feature>
<feature type="binding site" evidence="1">
    <location>
        <position position="93"/>
    </location>
    <ligand>
        <name>shikimate</name>
        <dbReference type="ChEBI" id="CHEBI:36208"/>
    </ligand>
</feature>
<feature type="binding site" evidence="1">
    <location>
        <position position="108"/>
    </location>
    <ligand>
        <name>shikimate</name>
        <dbReference type="ChEBI" id="CHEBI:36208"/>
    </ligand>
</feature>
<feature type="binding site" evidence="1">
    <location>
        <begin position="132"/>
        <end position="136"/>
    </location>
    <ligand>
        <name>NADP(+)</name>
        <dbReference type="ChEBI" id="CHEBI:58349"/>
    </ligand>
</feature>
<feature type="binding site" evidence="1">
    <location>
        <begin position="156"/>
        <end position="161"/>
    </location>
    <ligand>
        <name>NADP(+)</name>
        <dbReference type="ChEBI" id="CHEBI:58349"/>
    </ligand>
</feature>
<feature type="binding site" evidence="1">
    <location>
        <position position="228"/>
    </location>
    <ligand>
        <name>NADP(+)</name>
        <dbReference type="ChEBI" id="CHEBI:58349"/>
    </ligand>
</feature>
<feature type="binding site" evidence="1">
    <location>
        <position position="230"/>
    </location>
    <ligand>
        <name>shikimate</name>
        <dbReference type="ChEBI" id="CHEBI:36208"/>
    </ligand>
</feature>
<feature type="binding site" evidence="1">
    <location>
        <position position="251"/>
    </location>
    <ligand>
        <name>NADP(+)</name>
        <dbReference type="ChEBI" id="CHEBI:58349"/>
    </ligand>
</feature>
<keyword id="KW-0028">Amino-acid biosynthesis</keyword>
<keyword id="KW-0057">Aromatic amino acid biosynthesis</keyword>
<keyword id="KW-0521">NADP</keyword>
<keyword id="KW-0560">Oxidoreductase</keyword>
<sequence>MIQVKASTGLVALLGHPVQHSLSPLMHNAAFAAGGQNLVYLAFDVKPGDLAAALAGLKALGFRGANVTVPHKEAIIPYLDAVDPVAARIGAVNTIVNEDRCLKGYNTDGSGFLRSLEEAGFDPAGKRAVILGAGGAARAVAFALATAGCGSLVLANRTPERATELAGALAGAGLPAPVVYRLGDAGMRSEVEAADLVLNTTSLGMWPRVEETPLPPDWFRPGQWVYDLVYNPLETKFLAGARRRGCRVISGLDMLLYQGAAAFTLWTGREAPVAVMDRVLREAMGASSGGPAAGR</sequence>
<dbReference type="EC" id="1.1.1.25" evidence="1"/>
<dbReference type="EMBL" id="CP000232">
    <property type="protein sequence ID" value="ABC19867.1"/>
    <property type="molecule type" value="Genomic_DNA"/>
</dbReference>
<dbReference type="RefSeq" id="YP_430410.1">
    <property type="nucleotide sequence ID" value="NC_007644.1"/>
</dbReference>
<dbReference type="SMR" id="Q2RI72"/>
<dbReference type="STRING" id="264732.Moth_1558"/>
<dbReference type="EnsemblBacteria" id="ABC19867">
    <property type="protein sequence ID" value="ABC19867"/>
    <property type="gene ID" value="Moth_1558"/>
</dbReference>
<dbReference type="KEGG" id="mta:Moth_1558"/>
<dbReference type="PATRIC" id="fig|264732.11.peg.1685"/>
<dbReference type="eggNOG" id="COG0169">
    <property type="taxonomic scope" value="Bacteria"/>
</dbReference>
<dbReference type="HOGENOM" id="CLU_044063_0_1_9"/>
<dbReference type="OrthoDB" id="9792692at2"/>
<dbReference type="UniPathway" id="UPA00053">
    <property type="reaction ID" value="UER00087"/>
</dbReference>
<dbReference type="GO" id="GO:0050661">
    <property type="term" value="F:NADP binding"/>
    <property type="evidence" value="ECO:0007669"/>
    <property type="project" value="InterPro"/>
</dbReference>
<dbReference type="GO" id="GO:0004764">
    <property type="term" value="F:shikimate 3-dehydrogenase (NADP+) activity"/>
    <property type="evidence" value="ECO:0007669"/>
    <property type="project" value="UniProtKB-UniRule"/>
</dbReference>
<dbReference type="GO" id="GO:0008652">
    <property type="term" value="P:amino acid biosynthetic process"/>
    <property type="evidence" value="ECO:0007669"/>
    <property type="project" value="UniProtKB-KW"/>
</dbReference>
<dbReference type="GO" id="GO:0009073">
    <property type="term" value="P:aromatic amino acid family biosynthetic process"/>
    <property type="evidence" value="ECO:0007669"/>
    <property type="project" value="UniProtKB-KW"/>
</dbReference>
<dbReference type="GO" id="GO:0009423">
    <property type="term" value="P:chorismate biosynthetic process"/>
    <property type="evidence" value="ECO:0007669"/>
    <property type="project" value="UniProtKB-UniRule"/>
</dbReference>
<dbReference type="GO" id="GO:0019632">
    <property type="term" value="P:shikimate metabolic process"/>
    <property type="evidence" value="ECO:0007669"/>
    <property type="project" value="InterPro"/>
</dbReference>
<dbReference type="CDD" id="cd01065">
    <property type="entry name" value="NAD_bind_Shikimate_DH"/>
    <property type="match status" value="1"/>
</dbReference>
<dbReference type="FunFam" id="3.40.50.10860:FF:000004">
    <property type="entry name" value="Quinate/shikimate dehydrogenase"/>
    <property type="match status" value="1"/>
</dbReference>
<dbReference type="FunFam" id="3.40.50.720:FF:000086">
    <property type="entry name" value="Quinate/shikimate dehydrogenase"/>
    <property type="match status" value="1"/>
</dbReference>
<dbReference type="Gene3D" id="3.40.50.10860">
    <property type="entry name" value="Leucine Dehydrogenase, chain A, domain 1"/>
    <property type="match status" value="1"/>
</dbReference>
<dbReference type="Gene3D" id="3.40.50.720">
    <property type="entry name" value="NAD(P)-binding Rossmann-like Domain"/>
    <property type="match status" value="1"/>
</dbReference>
<dbReference type="HAMAP" id="MF_00222">
    <property type="entry name" value="Shikimate_DH_AroE"/>
    <property type="match status" value="1"/>
</dbReference>
<dbReference type="InterPro" id="IPR046346">
    <property type="entry name" value="Aminoacid_DH-like_N_sf"/>
</dbReference>
<dbReference type="InterPro" id="IPR036291">
    <property type="entry name" value="NAD(P)-bd_dom_sf"/>
</dbReference>
<dbReference type="InterPro" id="IPR041121">
    <property type="entry name" value="SDH_C"/>
</dbReference>
<dbReference type="InterPro" id="IPR011342">
    <property type="entry name" value="Shikimate_DH"/>
</dbReference>
<dbReference type="InterPro" id="IPR013708">
    <property type="entry name" value="Shikimate_DH-bd_N"/>
</dbReference>
<dbReference type="InterPro" id="IPR022893">
    <property type="entry name" value="Shikimate_DH_fam"/>
</dbReference>
<dbReference type="InterPro" id="IPR006151">
    <property type="entry name" value="Shikm_DH/Glu-tRNA_Rdtase"/>
</dbReference>
<dbReference type="NCBIfam" id="TIGR00507">
    <property type="entry name" value="aroE"/>
    <property type="match status" value="1"/>
</dbReference>
<dbReference type="NCBIfam" id="NF001314">
    <property type="entry name" value="PRK00258.2-2"/>
    <property type="match status" value="1"/>
</dbReference>
<dbReference type="NCBIfam" id="NF001319">
    <property type="entry name" value="PRK00258.3-3"/>
    <property type="match status" value="1"/>
</dbReference>
<dbReference type="PANTHER" id="PTHR21089:SF1">
    <property type="entry name" value="BIFUNCTIONAL 3-DEHYDROQUINATE DEHYDRATASE_SHIKIMATE DEHYDROGENASE, CHLOROPLASTIC"/>
    <property type="match status" value="1"/>
</dbReference>
<dbReference type="PANTHER" id="PTHR21089">
    <property type="entry name" value="SHIKIMATE DEHYDROGENASE"/>
    <property type="match status" value="1"/>
</dbReference>
<dbReference type="Pfam" id="PF18317">
    <property type="entry name" value="SDH_C"/>
    <property type="match status" value="1"/>
</dbReference>
<dbReference type="Pfam" id="PF01488">
    <property type="entry name" value="Shikimate_DH"/>
    <property type="match status" value="1"/>
</dbReference>
<dbReference type="Pfam" id="PF08501">
    <property type="entry name" value="Shikimate_dh_N"/>
    <property type="match status" value="1"/>
</dbReference>
<dbReference type="SUPFAM" id="SSF53223">
    <property type="entry name" value="Aminoacid dehydrogenase-like, N-terminal domain"/>
    <property type="match status" value="1"/>
</dbReference>
<dbReference type="SUPFAM" id="SSF51735">
    <property type="entry name" value="NAD(P)-binding Rossmann-fold domains"/>
    <property type="match status" value="1"/>
</dbReference>
<protein>
    <recommendedName>
        <fullName evidence="1">Shikimate dehydrogenase (NADP(+))</fullName>
        <shortName evidence="1">SDH</shortName>
        <ecNumber evidence="1">1.1.1.25</ecNumber>
    </recommendedName>
</protein>
<evidence type="ECO:0000255" key="1">
    <source>
        <dbReference type="HAMAP-Rule" id="MF_00222"/>
    </source>
</evidence>
<reference key="1">
    <citation type="journal article" date="2008" name="Environ. Microbiol.">
        <title>The complete genome sequence of Moorella thermoacetica (f. Clostridium thermoaceticum).</title>
        <authorList>
            <person name="Pierce E."/>
            <person name="Xie G."/>
            <person name="Barabote R.D."/>
            <person name="Saunders E."/>
            <person name="Han C.S."/>
            <person name="Detter J.C."/>
            <person name="Richardson P."/>
            <person name="Brettin T.S."/>
            <person name="Das A."/>
            <person name="Ljungdahl L.G."/>
            <person name="Ragsdale S.W."/>
        </authorList>
    </citation>
    <scope>NUCLEOTIDE SEQUENCE [LARGE SCALE GENOMIC DNA]</scope>
    <source>
        <strain>ATCC 39073 / JCM 9320</strain>
    </source>
</reference>
<organism>
    <name type="scientific">Moorella thermoacetica (strain ATCC 39073 / JCM 9320)</name>
    <dbReference type="NCBI Taxonomy" id="264732"/>
    <lineage>
        <taxon>Bacteria</taxon>
        <taxon>Bacillati</taxon>
        <taxon>Bacillota</taxon>
        <taxon>Clostridia</taxon>
        <taxon>Moorellales</taxon>
        <taxon>Moorellaceae</taxon>
        <taxon>Moorella</taxon>
    </lineage>
</organism>
<accession>Q2RI72</accession>